<keyword id="KW-0002">3D-structure</keyword>
<keyword id="KW-0963">Cytoplasm</keyword>
<keyword id="KW-0328">Glycosyltransferase</keyword>
<keyword id="KW-0460">Magnesium</keyword>
<keyword id="KW-0479">Metal-binding</keyword>
<keyword id="KW-0547">Nucleotide-binding</keyword>
<keyword id="KW-0660">Purine salvage</keyword>
<keyword id="KW-0808">Transferase</keyword>
<name>HPRT_TRYBB</name>
<protein>
    <recommendedName>
        <fullName>Hypoxanthine-guanine phosphoribosyltransferase</fullName>
        <shortName>HGPRT</shortName>
        <shortName>HGPRTase</shortName>
        <ecNumber>2.4.2.8</ecNumber>
    </recommendedName>
</protein>
<comment type="function">
    <text evidence="1">Converts guanine to guanosine monophosphate, and hypoxanthine to inosine monophosphate. Transfers the 5-phosphoribosyl group from 5-phosphoribosylpyrophosphate onto the purine. Plays a central role in the generation of purine nucleotides through the purine salvage pathway (By similarity).</text>
</comment>
<comment type="catalytic activity">
    <reaction>
        <text>IMP + diphosphate = hypoxanthine + 5-phospho-alpha-D-ribose 1-diphosphate</text>
        <dbReference type="Rhea" id="RHEA:17973"/>
        <dbReference type="ChEBI" id="CHEBI:17368"/>
        <dbReference type="ChEBI" id="CHEBI:33019"/>
        <dbReference type="ChEBI" id="CHEBI:58017"/>
        <dbReference type="ChEBI" id="CHEBI:58053"/>
        <dbReference type="EC" id="2.4.2.8"/>
    </reaction>
</comment>
<comment type="catalytic activity">
    <reaction>
        <text>GMP + diphosphate = guanine + 5-phospho-alpha-D-ribose 1-diphosphate</text>
        <dbReference type="Rhea" id="RHEA:25424"/>
        <dbReference type="ChEBI" id="CHEBI:16235"/>
        <dbReference type="ChEBI" id="CHEBI:33019"/>
        <dbReference type="ChEBI" id="CHEBI:58017"/>
        <dbReference type="ChEBI" id="CHEBI:58115"/>
        <dbReference type="EC" id="2.4.2.8"/>
    </reaction>
</comment>
<comment type="cofactor">
    <cofactor evidence="1">
        <name>Mg(2+)</name>
        <dbReference type="ChEBI" id="CHEBI:18420"/>
    </cofactor>
    <text evidence="1">Binds 2 magnesium ions per subunit. The magnesium ions are essentially bound to the substrate and have few direct interactions with the protein.</text>
</comment>
<comment type="pathway">
    <text>Purine metabolism; IMP biosynthesis via salvage pathway; IMP from hypoxanthine: step 1/1.</text>
</comment>
<comment type="subcellular location">
    <subcellularLocation>
        <location>Cytoplasm</location>
    </subcellularLocation>
</comment>
<comment type="similarity">
    <text evidence="2">Belongs to the purine/pyrimidine phosphoribosyltransferase family.</text>
</comment>
<reference key="1">
    <citation type="journal article" date="1993" name="Nucleic Acids Res.">
        <title>Cloning and expression of the hypoxanthine-guanine phosphoribosyltransferase gene from Trypanosoma brucei.</title>
        <authorList>
            <person name="Allen T.E."/>
            <person name="Ullman B."/>
        </authorList>
    </citation>
    <scope>NUCLEOTIDE SEQUENCE</scope>
</reference>
<dbReference type="EC" id="2.4.2.8"/>
<dbReference type="EMBL" id="L10721">
    <property type="protein sequence ID" value="AAA16328.1"/>
    <property type="molecule type" value="Unassigned_DNA"/>
</dbReference>
<dbReference type="PIR" id="S41631">
    <property type="entry name" value="S41631"/>
</dbReference>
<dbReference type="PDB" id="5JSQ">
    <property type="method" value="X-ray"/>
    <property type="resolution" value="1.50 A"/>
    <property type="chains" value="A/B=1-210"/>
</dbReference>
<dbReference type="PDB" id="5JV5">
    <property type="method" value="X-ray"/>
    <property type="resolution" value="2.73 A"/>
    <property type="chains" value="A/B=1-210"/>
</dbReference>
<dbReference type="PDB" id="5K51">
    <property type="method" value="X-ray"/>
    <property type="resolution" value="2.96 A"/>
    <property type="chains" value="A/B/C/D=1-210"/>
</dbReference>
<dbReference type="PDB" id="5KAM">
    <property type="method" value="X-ray"/>
    <property type="resolution" value="2.48 A"/>
    <property type="chains" value="A/C=1-210"/>
</dbReference>
<dbReference type="PDB" id="5KAP">
    <property type="method" value="X-ray"/>
    <property type="resolution" value="2.95 A"/>
    <property type="chains" value="A/B=1-210"/>
</dbReference>
<dbReference type="PDB" id="6APS">
    <property type="method" value="X-ray"/>
    <property type="resolution" value="1.76 A"/>
    <property type="chains" value="A/B=1-210"/>
</dbReference>
<dbReference type="PDB" id="6APT">
    <property type="method" value="X-ray"/>
    <property type="resolution" value="1.79 A"/>
    <property type="chains" value="A/B=1-210"/>
</dbReference>
<dbReference type="PDB" id="6APU">
    <property type="method" value="X-ray"/>
    <property type="resolution" value="1.84 A"/>
    <property type="chains" value="A/B=1-210"/>
</dbReference>
<dbReference type="PDB" id="6APV">
    <property type="method" value="X-ray"/>
    <property type="resolution" value="1.99 A"/>
    <property type="chains" value="A/B/C/D=1-210"/>
</dbReference>
<dbReference type="PDB" id="6MXG">
    <property type="method" value="X-ray"/>
    <property type="resolution" value="2.39 A"/>
    <property type="chains" value="A/B=1-210"/>
</dbReference>
<dbReference type="PDB" id="7SB7">
    <property type="method" value="X-ray"/>
    <property type="resolution" value="2.65 A"/>
    <property type="chains" value="A/B=1-210"/>
</dbReference>
<dbReference type="PDB" id="8TR1">
    <property type="method" value="X-ray"/>
    <property type="resolution" value="2.46 A"/>
    <property type="chains" value="A/B/C/D=4-204"/>
</dbReference>
<dbReference type="PDB" id="8TS4">
    <property type="method" value="X-ray"/>
    <property type="resolution" value="2.20 A"/>
    <property type="chains" value="A/B=1-210"/>
</dbReference>
<dbReference type="PDBsum" id="5JSQ"/>
<dbReference type="PDBsum" id="5JV5"/>
<dbReference type="PDBsum" id="5K51"/>
<dbReference type="PDBsum" id="5KAM"/>
<dbReference type="PDBsum" id="5KAP"/>
<dbReference type="PDBsum" id="6APS"/>
<dbReference type="PDBsum" id="6APT"/>
<dbReference type="PDBsum" id="6APU"/>
<dbReference type="PDBsum" id="6APV"/>
<dbReference type="PDBsum" id="6MXG"/>
<dbReference type="PDBsum" id="7SB7"/>
<dbReference type="PDBsum" id="8TR1"/>
<dbReference type="PDBsum" id="8TS4"/>
<dbReference type="SMR" id="Q07010"/>
<dbReference type="BindingDB" id="Q07010"/>
<dbReference type="ChEMBL" id="CHEMBL5069"/>
<dbReference type="DrugCentral" id="Q07010"/>
<dbReference type="OMA" id="VIFMEDI"/>
<dbReference type="BioCyc" id="MetaCyc:MONOMER-15863"/>
<dbReference type="BRENDA" id="2.4.2.8">
    <property type="organism ID" value="6520"/>
</dbReference>
<dbReference type="UniPathway" id="UPA00591">
    <property type="reaction ID" value="UER00648"/>
</dbReference>
<dbReference type="GO" id="GO:0097014">
    <property type="term" value="C:ciliary plasm"/>
    <property type="evidence" value="ECO:0000314"/>
    <property type="project" value="GeneDB"/>
</dbReference>
<dbReference type="GO" id="GO:0005737">
    <property type="term" value="C:cytoplasm"/>
    <property type="evidence" value="ECO:0000314"/>
    <property type="project" value="GeneDB"/>
</dbReference>
<dbReference type="GO" id="GO:0005829">
    <property type="term" value="C:cytosol"/>
    <property type="evidence" value="ECO:0000314"/>
    <property type="project" value="GeneDB"/>
</dbReference>
<dbReference type="GO" id="GO:0020015">
    <property type="term" value="C:glycosome"/>
    <property type="evidence" value="ECO:0000314"/>
    <property type="project" value="GeneDB"/>
</dbReference>
<dbReference type="GO" id="GO:0031981">
    <property type="term" value="C:nuclear lumen"/>
    <property type="evidence" value="ECO:0000314"/>
    <property type="project" value="GeneDB"/>
</dbReference>
<dbReference type="GO" id="GO:0052657">
    <property type="term" value="F:guanine phosphoribosyltransferase activity"/>
    <property type="evidence" value="ECO:0007669"/>
    <property type="project" value="RHEA"/>
</dbReference>
<dbReference type="GO" id="GO:0004422">
    <property type="term" value="F:hypoxanthine phosphoribosyltransferase activity"/>
    <property type="evidence" value="ECO:0007669"/>
    <property type="project" value="InterPro"/>
</dbReference>
<dbReference type="GO" id="GO:0000287">
    <property type="term" value="F:magnesium ion binding"/>
    <property type="evidence" value="ECO:0007669"/>
    <property type="project" value="TreeGrafter"/>
</dbReference>
<dbReference type="GO" id="GO:0000166">
    <property type="term" value="F:nucleotide binding"/>
    <property type="evidence" value="ECO:0007669"/>
    <property type="project" value="UniProtKB-KW"/>
</dbReference>
<dbReference type="GO" id="GO:0032263">
    <property type="term" value="P:GMP salvage"/>
    <property type="evidence" value="ECO:0007669"/>
    <property type="project" value="TreeGrafter"/>
</dbReference>
<dbReference type="GO" id="GO:0006178">
    <property type="term" value="P:guanine salvage"/>
    <property type="evidence" value="ECO:0007669"/>
    <property type="project" value="TreeGrafter"/>
</dbReference>
<dbReference type="GO" id="GO:0046100">
    <property type="term" value="P:hypoxanthine metabolic process"/>
    <property type="evidence" value="ECO:0007669"/>
    <property type="project" value="TreeGrafter"/>
</dbReference>
<dbReference type="GO" id="GO:0032264">
    <property type="term" value="P:IMP salvage"/>
    <property type="evidence" value="ECO:0007669"/>
    <property type="project" value="UniProtKB-UniPathway"/>
</dbReference>
<dbReference type="GO" id="GO:0006166">
    <property type="term" value="P:purine ribonucleoside salvage"/>
    <property type="evidence" value="ECO:0007669"/>
    <property type="project" value="UniProtKB-KW"/>
</dbReference>
<dbReference type="CDD" id="cd06223">
    <property type="entry name" value="PRTases_typeI"/>
    <property type="match status" value="1"/>
</dbReference>
<dbReference type="FunFam" id="3.40.50.2020:FF:000046">
    <property type="entry name" value="Hypoxanthine-guanine phosphoribosyltransferase"/>
    <property type="match status" value="1"/>
</dbReference>
<dbReference type="Gene3D" id="3.40.50.2020">
    <property type="match status" value="1"/>
</dbReference>
<dbReference type="InterPro" id="IPR050408">
    <property type="entry name" value="HGPRT"/>
</dbReference>
<dbReference type="InterPro" id="IPR005904">
    <property type="entry name" value="Hxn_phspho_trans"/>
</dbReference>
<dbReference type="InterPro" id="IPR000836">
    <property type="entry name" value="PRibTrfase_dom"/>
</dbReference>
<dbReference type="InterPro" id="IPR029057">
    <property type="entry name" value="PRTase-like"/>
</dbReference>
<dbReference type="NCBIfam" id="TIGR01203">
    <property type="entry name" value="HGPRTase"/>
    <property type="match status" value="1"/>
</dbReference>
<dbReference type="PANTHER" id="PTHR43340:SF1">
    <property type="entry name" value="HYPOXANTHINE PHOSPHORIBOSYLTRANSFERASE"/>
    <property type="match status" value="1"/>
</dbReference>
<dbReference type="PANTHER" id="PTHR43340">
    <property type="entry name" value="HYPOXANTHINE-GUANINE PHOSPHORIBOSYLTRANSFERASE"/>
    <property type="match status" value="1"/>
</dbReference>
<dbReference type="Pfam" id="PF00156">
    <property type="entry name" value="Pribosyltran"/>
    <property type="match status" value="1"/>
</dbReference>
<dbReference type="SUPFAM" id="SSF53271">
    <property type="entry name" value="PRTase-like"/>
    <property type="match status" value="1"/>
</dbReference>
<dbReference type="PROSITE" id="PS00103">
    <property type="entry name" value="PUR_PYR_PR_TRANSFER"/>
    <property type="match status" value="1"/>
</dbReference>
<evidence type="ECO:0000250" key="1"/>
<evidence type="ECO:0000305" key="2"/>
<evidence type="ECO:0007829" key="3">
    <source>
        <dbReference type="PDB" id="5JSQ"/>
    </source>
</evidence>
<evidence type="ECO:0007829" key="4">
    <source>
        <dbReference type="PDB" id="6APU"/>
    </source>
</evidence>
<evidence type="ECO:0007829" key="5">
    <source>
        <dbReference type="PDB" id="6APV"/>
    </source>
</evidence>
<evidence type="ECO:0007829" key="6">
    <source>
        <dbReference type="PDB" id="6MXG"/>
    </source>
</evidence>
<evidence type="ECO:0007829" key="7">
    <source>
        <dbReference type="PDB" id="8TS4"/>
    </source>
</evidence>
<sequence length="210" mass="23360">MEPACKYDFATSVLFTEAELHTRMRGVAQRIADDYSNCNLKPLENPLVIVSVLKGSFVFTADMVRILGDFGVPTRVEFLRASSYGHDTKSCGRVDVKADGLCDIRGKHVLVLEDILDTALTLREVVDSLKKSEPASIKTLVAIDKPGGRKIPFTAEYVVADVPNVFVVGYGLDYDQSYREVRDVVILKPSVYETWGKELERRKAAGEAKR</sequence>
<proteinExistence type="evidence at protein level"/>
<organism>
    <name type="scientific">Trypanosoma brucei brucei</name>
    <dbReference type="NCBI Taxonomy" id="5702"/>
    <lineage>
        <taxon>Eukaryota</taxon>
        <taxon>Discoba</taxon>
        <taxon>Euglenozoa</taxon>
        <taxon>Kinetoplastea</taxon>
        <taxon>Metakinetoplastina</taxon>
        <taxon>Trypanosomatida</taxon>
        <taxon>Trypanosomatidae</taxon>
        <taxon>Trypanosoma</taxon>
    </lineage>
</organism>
<accession>Q07010</accession>
<feature type="chain" id="PRO_0000139596" description="Hypoxanthine-guanine phosphoribosyltransferase">
    <location>
        <begin position="1"/>
        <end position="210"/>
    </location>
</feature>
<feature type="active site" description="Proton acceptor" evidence="1">
    <location>
        <position position="117"/>
    </location>
</feature>
<feature type="binding site" evidence="1">
    <location>
        <position position="54"/>
    </location>
    <ligand>
        <name>GMP</name>
        <dbReference type="ChEBI" id="CHEBI:58115"/>
    </ligand>
</feature>
<feature type="binding site" evidence="1">
    <location>
        <begin position="113"/>
        <end position="121"/>
    </location>
    <ligand>
        <name>GMP</name>
        <dbReference type="ChEBI" id="CHEBI:58115"/>
    </ligand>
</feature>
<feature type="binding site" evidence="1">
    <location>
        <position position="145"/>
    </location>
    <ligand>
        <name>GMP</name>
        <dbReference type="ChEBI" id="CHEBI:58115"/>
    </ligand>
</feature>
<feature type="binding site" evidence="1">
    <location>
        <position position="173"/>
    </location>
    <ligand>
        <name>GMP</name>
        <dbReference type="ChEBI" id="CHEBI:58115"/>
    </ligand>
</feature>
<feature type="binding site" evidence="1">
    <location>
        <position position="173"/>
    </location>
    <ligand>
        <name>Mg(2+)</name>
        <dbReference type="ChEBI" id="CHEBI:18420"/>
    </ligand>
</feature>
<feature type="strand" evidence="7">
    <location>
        <begin position="5"/>
        <end position="7"/>
    </location>
</feature>
<feature type="strand" evidence="3">
    <location>
        <begin position="10"/>
        <end position="15"/>
    </location>
</feature>
<feature type="helix" evidence="3">
    <location>
        <begin position="17"/>
        <end position="34"/>
    </location>
</feature>
<feature type="helix" evidence="3">
    <location>
        <begin position="36"/>
        <end position="38"/>
    </location>
</feature>
<feature type="turn" evidence="3">
    <location>
        <begin position="42"/>
        <end position="44"/>
    </location>
</feature>
<feature type="strand" evidence="3">
    <location>
        <begin position="47"/>
        <end position="53"/>
    </location>
</feature>
<feature type="helix" evidence="3">
    <location>
        <begin position="54"/>
        <end position="56"/>
    </location>
</feature>
<feature type="helix" evidence="3">
    <location>
        <begin position="57"/>
        <end position="69"/>
    </location>
</feature>
<feature type="strand" evidence="3">
    <location>
        <begin position="74"/>
        <end position="79"/>
    </location>
</feature>
<feature type="helix" evidence="4">
    <location>
        <begin position="81"/>
        <end position="83"/>
    </location>
</feature>
<feature type="strand" evidence="3">
    <location>
        <begin position="108"/>
        <end position="118"/>
    </location>
</feature>
<feature type="helix" evidence="3">
    <location>
        <begin position="120"/>
        <end position="130"/>
    </location>
</feature>
<feature type="strand" evidence="3">
    <location>
        <begin position="135"/>
        <end position="144"/>
    </location>
</feature>
<feature type="helix" evidence="3">
    <location>
        <begin position="146"/>
        <end position="148"/>
    </location>
</feature>
<feature type="strand" evidence="3">
    <location>
        <begin position="156"/>
        <end position="161"/>
    </location>
</feature>
<feature type="strand" evidence="3">
    <location>
        <begin position="167"/>
        <end position="169"/>
    </location>
</feature>
<feature type="strand" evidence="6">
    <location>
        <begin position="174"/>
        <end position="176"/>
    </location>
</feature>
<feature type="strand" evidence="3">
    <location>
        <begin position="182"/>
        <end position="187"/>
    </location>
</feature>
<feature type="helix" evidence="3">
    <location>
        <begin position="189"/>
        <end position="198"/>
    </location>
</feature>
<feature type="helix" evidence="5">
    <location>
        <begin position="201"/>
        <end position="204"/>
    </location>
</feature>
<gene>
    <name type="primary">HGPRT</name>
</gene>